<accession>P85486</accession>
<evidence type="ECO:0000269" key="1">
    <source>
    </source>
</evidence>
<evidence type="ECO:0000303" key="2">
    <source>
    </source>
</evidence>
<evidence type="ECO:0000305" key="3"/>
<dbReference type="GO" id="GO:0005576">
    <property type="term" value="C:extracellular region"/>
    <property type="evidence" value="ECO:0007669"/>
    <property type="project" value="UniProtKB-KW"/>
</dbReference>
<organism>
    <name type="scientific">Pinus halepensis</name>
    <name type="common">Aleppo pine</name>
    <dbReference type="NCBI Taxonomy" id="71633"/>
    <lineage>
        <taxon>Eukaryota</taxon>
        <taxon>Viridiplantae</taxon>
        <taxon>Streptophyta</taxon>
        <taxon>Embryophyta</taxon>
        <taxon>Tracheophyta</taxon>
        <taxon>Spermatophyta</taxon>
        <taxon>Pinopsida</taxon>
        <taxon>Pinidae</taxon>
        <taxon>Conifers I</taxon>
        <taxon>Pinales</taxon>
        <taxon>Pinaceae</taxon>
        <taxon>Pinus</taxon>
        <taxon>Pinus subgen. Pinus</taxon>
    </lineage>
</organism>
<name>UP02_PINHA</name>
<comment type="subcellular location">
    <subcellularLocation>
        <location evidence="1">Secreted</location>
        <location evidence="1">Cell wall</location>
    </subcellularLocation>
</comment>
<sequence>DVSLPAEGFR</sequence>
<proteinExistence type="evidence at protein level"/>
<feature type="chain" id="PRO_0000326444" description="Unknown protein 2">
    <location>
        <begin position="1" status="less than"/>
        <end position="10" status="greater than"/>
    </location>
</feature>
<feature type="unsure residue" description="L or I">
    <location>
        <position position="4"/>
    </location>
</feature>
<feature type="non-terminal residue" evidence="2">
    <location>
        <position position="1"/>
    </location>
</feature>
<feature type="non-terminal residue" evidence="2">
    <location>
        <position position="10"/>
    </location>
</feature>
<reference evidence="3" key="1">
    <citation type="journal article" date="2009" name="J. Plant Physiol.">
        <title>Analysis of the soluble cell wall proteome of gymnosperms.</title>
        <authorList>
            <person name="Uzal E.N."/>
            <person name="Gomez-Ros L.V."/>
            <person name="Hernandez J.A."/>
            <person name="Pedreno M.A."/>
            <person name="Cuello J."/>
            <person name="Ros Barcelo A."/>
        </authorList>
    </citation>
    <scope>PROTEIN SEQUENCE</scope>
    <scope>SUBCELLULAR LOCATION</scope>
    <source>
        <strain evidence="1">PC-801</strain>
        <tissue evidence="1">Callus</tissue>
    </source>
</reference>
<protein>
    <recommendedName>
        <fullName>Unknown protein 2</fullName>
    </recommendedName>
</protein>
<keyword id="KW-0134">Cell wall</keyword>
<keyword id="KW-0903">Direct protein sequencing</keyword>
<keyword id="KW-0964">Secreted</keyword>